<sequence>MKKHNYSAGPSILPQEVFEKASKAVLNFNDSGLSILEISHRSKDFVAVMDEARSLALELLGLQGKGYQALFLQGGASTAFLMAPYNLMKENGKAAYLDSGTWATAAIKEAKLFGETVIVGSSKDDNYTYIPKGYEIPADADYFHCTSNNTIFGTQIQEFPSTNIPVVCDMSSDIFSRELDFSKFDLIYAGAQKNMGPAGTTLVVVKEEILGKNGRTIPSMLDYAKHIKAESMYNTPSVFAVYVSLLTLQWIKAKGGIAAVEKLNNAKADLLYAEIDRNPLFKGAANVEDRSKMNVTFLLNNPEHTETFDALWKAAGISGLPGHRSVGGYRASIYNAMPIESVQVLVDVMKALESKV</sequence>
<dbReference type="EC" id="2.6.1.52" evidence="1"/>
<dbReference type="EMBL" id="CP000685">
    <property type="protein sequence ID" value="ABQ05489.1"/>
    <property type="molecule type" value="Genomic_DNA"/>
</dbReference>
<dbReference type="RefSeq" id="WP_012024528.1">
    <property type="nucleotide sequence ID" value="NC_009441.1"/>
</dbReference>
<dbReference type="SMR" id="A5FH28"/>
<dbReference type="STRING" id="376686.Fjoh_2462"/>
<dbReference type="KEGG" id="fjo:Fjoh_2462"/>
<dbReference type="eggNOG" id="COG1932">
    <property type="taxonomic scope" value="Bacteria"/>
</dbReference>
<dbReference type="HOGENOM" id="CLU_034866_0_2_10"/>
<dbReference type="OrthoDB" id="9809412at2"/>
<dbReference type="UniPathway" id="UPA00135">
    <property type="reaction ID" value="UER00197"/>
</dbReference>
<dbReference type="UniPathway" id="UPA00244">
    <property type="reaction ID" value="UER00311"/>
</dbReference>
<dbReference type="Proteomes" id="UP000006694">
    <property type="component" value="Chromosome"/>
</dbReference>
<dbReference type="GO" id="GO:0005737">
    <property type="term" value="C:cytoplasm"/>
    <property type="evidence" value="ECO:0007669"/>
    <property type="project" value="UniProtKB-SubCell"/>
</dbReference>
<dbReference type="GO" id="GO:0004648">
    <property type="term" value="F:O-phospho-L-serine:2-oxoglutarate aminotransferase activity"/>
    <property type="evidence" value="ECO:0007669"/>
    <property type="project" value="UniProtKB-UniRule"/>
</dbReference>
<dbReference type="GO" id="GO:0030170">
    <property type="term" value="F:pyridoxal phosphate binding"/>
    <property type="evidence" value="ECO:0007669"/>
    <property type="project" value="UniProtKB-UniRule"/>
</dbReference>
<dbReference type="GO" id="GO:0006564">
    <property type="term" value="P:L-serine biosynthetic process"/>
    <property type="evidence" value="ECO:0007669"/>
    <property type="project" value="UniProtKB-UniRule"/>
</dbReference>
<dbReference type="GO" id="GO:0008615">
    <property type="term" value="P:pyridoxine biosynthetic process"/>
    <property type="evidence" value="ECO:0007669"/>
    <property type="project" value="UniProtKB-UniRule"/>
</dbReference>
<dbReference type="FunFam" id="3.40.640.10:FF:000010">
    <property type="entry name" value="Phosphoserine aminotransferase"/>
    <property type="match status" value="1"/>
</dbReference>
<dbReference type="FunFam" id="3.90.1150.10:FF:000006">
    <property type="entry name" value="Phosphoserine aminotransferase"/>
    <property type="match status" value="1"/>
</dbReference>
<dbReference type="Gene3D" id="3.90.1150.10">
    <property type="entry name" value="Aspartate Aminotransferase, domain 1"/>
    <property type="match status" value="1"/>
</dbReference>
<dbReference type="Gene3D" id="3.40.640.10">
    <property type="entry name" value="Type I PLP-dependent aspartate aminotransferase-like (Major domain)"/>
    <property type="match status" value="1"/>
</dbReference>
<dbReference type="HAMAP" id="MF_00160">
    <property type="entry name" value="SerC_aminotrans_5"/>
    <property type="match status" value="1"/>
</dbReference>
<dbReference type="InterPro" id="IPR000192">
    <property type="entry name" value="Aminotrans_V_dom"/>
</dbReference>
<dbReference type="InterPro" id="IPR020578">
    <property type="entry name" value="Aminotrans_V_PyrdxlP_BS"/>
</dbReference>
<dbReference type="InterPro" id="IPR022278">
    <property type="entry name" value="Pser_aminoTfrase"/>
</dbReference>
<dbReference type="InterPro" id="IPR015424">
    <property type="entry name" value="PyrdxlP-dep_Trfase"/>
</dbReference>
<dbReference type="InterPro" id="IPR015421">
    <property type="entry name" value="PyrdxlP-dep_Trfase_major"/>
</dbReference>
<dbReference type="InterPro" id="IPR015422">
    <property type="entry name" value="PyrdxlP-dep_Trfase_small"/>
</dbReference>
<dbReference type="NCBIfam" id="NF003764">
    <property type="entry name" value="PRK05355.1"/>
    <property type="match status" value="1"/>
</dbReference>
<dbReference type="PANTHER" id="PTHR43247">
    <property type="entry name" value="PHOSPHOSERINE AMINOTRANSFERASE"/>
    <property type="match status" value="1"/>
</dbReference>
<dbReference type="PANTHER" id="PTHR43247:SF1">
    <property type="entry name" value="PHOSPHOSERINE AMINOTRANSFERASE"/>
    <property type="match status" value="1"/>
</dbReference>
<dbReference type="Pfam" id="PF00266">
    <property type="entry name" value="Aminotran_5"/>
    <property type="match status" value="1"/>
</dbReference>
<dbReference type="PIRSF" id="PIRSF000525">
    <property type="entry name" value="SerC"/>
    <property type="match status" value="1"/>
</dbReference>
<dbReference type="SUPFAM" id="SSF53383">
    <property type="entry name" value="PLP-dependent transferases"/>
    <property type="match status" value="1"/>
</dbReference>
<dbReference type="PROSITE" id="PS00595">
    <property type="entry name" value="AA_TRANSFER_CLASS_5"/>
    <property type="match status" value="1"/>
</dbReference>
<accession>A5FH28</accession>
<name>SERC_FLAJ1</name>
<comment type="function">
    <text evidence="1">Catalyzes the reversible conversion of 3-phosphohydroxypyruvate to phosphoserine and of 3-hydroxy-2-oxo-4-phosphonooxybutanoate to phosphohydroxythreonine.</text>
</comment>
<comment type="catalytic activity">
    <reaction evidence="1">
        <text>O-phospho-L-serine + 2-oxoglutarate = 3-phosphooxypyruvate + L-glutamate</text>
        <dbReference type="Rhea" id="RHEA:14329"/>
        <dbReference type="ChEBI" id="CHEBI:16810"/>
        <dbReference type="ChEBI" id="CHEBI:18110"/>
        <dbReference type="ChEBI" id="CHEBI:29985"/>
        <dbReference type="ChEBI" id="CHEBI:57524"/>
        <dbReference type="EC" id="2.6.1.52"/>
    </reaction>
</comment>
<comment type="catalytic activity">
    <reaction evidence="1">
        <text>4-(phosphooxy)-L-threonine + 2-oxoglutarate = (R)-3-hydroxy-2-oxo-4-phosphooxybutanoate + L-glutamate</text>
        <dbReference type="Rhea" id="RHEA:16573"/>
        <dbReference type="ChEBI" id="CHEBI:16810"/>
        <dbReference type="ChEBI" id="CHEBI:29985"/>
        <dbReference type="ChEBI" id="CHEBI:58452"/>
        <dbReference type="ChEBI" id="CHEBI:58538"/>
        <dbReference type="EC" id="2.6.1.52"/>
    </reaction>
</comment>
<comment type="cofactor">
    <cofactor evidence="1">
        <name>pyridoxal 5'-phosphate</name>
        <dbReference type="ChEBI" id="CHEBI:597326"/>
    </cofactor>
    <text evidence="1">Binds 1 pyridoxal phosphate per subunit.</text>
</comment>
<comment type="pathway">
    <text evidence="1">Amino-acid biosynthesis; L-serine biosynthesis; L-serine from 3-phospho-D-glycerate: step 2/3.</text>
</comment>
<comment type="pathway">
    <text evidence="1">Cofactor biosynthesis; pyridoxine 5'-phosphate biosynthesis; pyridoxine 5'-phosphate from D-erythrose 4-phosphate: step 3/5.</text>
</comment>
<comment type="subunit">
    <text evidence="1">Homodimer.</text>
</comment>
<comment type="subcellular location">
    <subcellularLocation>
        <location evidence="1">Cytoplasm</location>
    </subcellularLocation>
</comment>
<comment type="similarity">
    <text evidence="1">Belongs to the class-V pyridoxal-phosphate-dependent aminotransferase family. SerC subfamily.</text>
</comment>
<reference key="1">
    <citation type="journal article" date="2009" name="Appl. Environ. Microbiol.">
        <title>Novel features of the polysaccharide-digesting gliding bacterium Flavobacterium johnsoniae as revealed by genome sequence analysis.</title>
        <authorList>
            <person name="McBride M.J."/>
            <person name="Xie G."/>
            <person name="Martens E.C."/>
            <person name="Lapidus A."/>
            <person name="Henrissat B."/>
            <person name="Rhodes R.G."/>
            <person name="Goltsman E."/>
            <person name="Wang W."/>
            <person name="Xu J."/>
            <person name="Hunnicutt D.W."/>
            <person name="Staroscik A.M."/>
            <person name="Hoover T.R."/>
            <person name="Cheng Y.Q."/>
            <person name="Stein J.L."/>
        </authorList>
    </citation>
    <scope>NUCLEOTIDE SEQUENCE [LARGE SCALE GENOMIC DNA]</scope>
    <source>
        <strain>ATCC 17061 / DSM 2064 / JCM 8514 / BCRC 14874 / CCUG 350202 / NBRC 14942 / NCIMB 11054 / UW101</strain>
    </source>
</reference>
<keyword id="KW-0028">Amino-acid biosynthesis</keyword>
<keyword id="KW-0032">Aminotransferase</keyword>
<keyword id="KW-0963">Cytoplasm</keyword>
<keyword id="KW-0663">Pyridoxal phosphate</keyword>
<keyword id="KW-0664">Pyridoxine biosynthesis</keyword>
<keyword id="KW-0718">Serine biosynthesis</keyword>
<keyword id="KW-0808">Transferase</keyword>
<gene>
    <name evidence="1" type="primary">serC</name>
    <name type="ordered locus">Fjoh_2462</name>
</gene>
<proteinExistence type="inferred from homology"/>
<protein>
    <recommendedName>
        <fullName evidence="1">Phosphoserine aminotransferase</fullName>
        <ecNumber evidence="1">2.6.1.52</ecNumber>
    </recommendedName>
    <alternativeName>
        <fullName evidence="1">Phosphohydroxythreonine aminotransferase</fullName>
        <shortName evidence="1">PSAT</shortName>
    </alternativeName>
</protein>
<feature type="chain" id="PRO_1000076906" description="Phosphoserine aminotransferase">
    <location>
        <begin position="1"/>
        <end position="356"/>
    </location>
</feature>
<feature type="binding site" evidence="1">
    <location>
        <position position="41"/>
    </location>
    <ligand>
        <name>L-glutamate</name>
        <dbReference type="ChEBI" id="CHEBI:29985"/>
    </ligand>
</feature>
<feature type="binding site" evidence="1">
    <location>
        <begin position="76"/>
        <end position="77"/>
    </location>
    <ligand>
        <name>pyridoxal 5'-phosphate</name>
        <dbReference type="ChEBI" id="CHEBI:597326"/>
    </ligand>
</feature>
<feature type="binding site" evidence="1">
    <location>
        <position position="102"/>
    </location>
    <ligand>
        <name>pyridoxal 5'-phosphate</name>
        <dbReference type="ChEBI" id="CHEBI:597326"/>
    </ligand>
</feature>
<feature type="binding site" evidence="1">
    <location>
        <position position="150"/>
    </location>
    <ligand>
        <name>pyridoxal 5'-phosphate</name>
        <dbReference type="ChEBI" id="CHEBI:597326"/>
    </ligand>
</feature>
<feature type="binding site" evidence="1">
    <location>
        <position position="169"/>
    </location>
    <ligand>
        <name>pyridoxal 5'-phosphate</name>
        <dbReference type="ChEBI" id="CHEBI:597326"/>
    </ligand>
</feature>
<feature type="binding site" evidence="1">
    <location>
        <position position="192"/>
    </location>
    <ligand>
        <name>pyridoxal 5'-phosphate</name>
        <dbReference type="ChEBI" id="CHEBI:597326"/>
    </ligand>
</feature>
<feature type="binding site" evidence="1">
    <location>
        <begin position="234"/>
        <end position="235"/>
    </location>
    <ligand>
        <name>pyridoxal 5'-phosphate</name>
        <dbReference type="ChEBI" id="CHEBI:597326"/>
    </ligand>
</feature>
<feature type="modified residue" description="N6-(pyridoxal phosphate)lysine" evidence="1">
    <location>
        <position position="193"/>
    </location>
</feature>
<evidence type="ECO:0000255" key="1">
    <source>
        <dbReference type="HAMAP-Rule" id="MF_00160"/>
    </source>
</evidence>
<organism>
    <name type="scientific">Flavobacterium johnsoniae (strain ATCC 17061 / DSM 2064 / JCM 8514 / BCRC 14874 / CCUG 350202 / NBRC 14942 / NCIMB 11054 / UW101)</name>
    <name type="common">Cytophaga johnsonae</name>
    <dbReference type="NCBI Taxonomy" id="376686"/>
    <lineage>
        <taxon>Bacteria</taxon>
        <taxon>Pseudomonadati</taxon>
        <taxon>Bacteroidota</taxon>
        <taxon>Flavobacteriia</taxon>
        <taxon>Flavobacteriales</taxon>
        <taxon>Flavobacteriaceae</taxon>
        <taxon>Flavobacterium</taxon>
    </lineage>
</organism>